<dbReference type="EC" id="1.97.1.12" evidence="1"/>
<dbReference type="EMBL" id="AJ428413">
    <property type="protein sequence ID" value="CAD28720.1"/>
    <property type="molecule type" value="Genomic_DNA"/>
</dbReference>
<dbReference type="RefSeq" id="NP_862753.1">
    <property type="nucleotide sequence ID" value="NC_004993.1"/>
</dbReference>
<dbReference type="SMR" id="Q7YJX3"/>
<dbReference type="GeneID" id="2598001"/>
<dbReference type="GO" id="GO:0009535">
    <property type="term" value="C:chloroplast thylakoid membrane"/>
    <property type="evidence" value="ECO:0007669"/>
    <property type="project" value="UniProtKB-SubCell"/>
</dbReference>
<dbReference type="GO" id="GO:0009522">
    <property type="term" value="C:photosystem I"/>
    <property type="evidence" value="ECO:0007669"/>
    <property type="project" value="UniProtKB-KW"/>
</dbReference>
<dbReference type="GO" id="GO:0051539">
    <property type="term" value="F:4 iron, 4 sulfur cluster binding"/>
    <property type="evidence" value="ECO:0007669"/>
    <property type="project" value="UniProtKB-KW"/>
</dbReference>
<dbReference type="GO" id="GO:0016168">
    <property type="term" value="F:chlorophyll binding"/>
    <property type="evidence" value="ECO:0007669"/>
    <property type="project" value="UniProtKB-KW"/>
</dbReference>
<dbReference type="GO" id="GO:0009055">
    <property type="term" value="F:electron transfer activity"/>
    <property type="evidence" value="ECO:0007669"/>
    <property type="project" value="UniProtKB-UniRule"/>
</dbReference>
<dbReference type="GO" id="GO:0000287">
    <property type="term" value="F:magnesium ion binding"/>
    <property type="evidence" value="ECO:0007669"/>
    <property type="project" value="UniProtKB-UniRule"/>
</dbReference>
<dbReference type="GO" id="GO:0016491">
    <property type="term" value="F:oxidoreductase activity"/>
    <property type="evidence" value="ECO:0007669"/>
    <property type="project" value="UniProtKB-KW"/>
</dbReference>
<dbReference type="GO" id="GO:0015979">
    <property type="term" value="P:photosynthesis"/>
    <property type="evidence" value="ECO:0007669"/>
    <property type="project" value="UniProtKB-UniRule"/>
</dbReference>
<dbReference type="FunFam" id="1.20.1130.10:FF:000001">
    <property type="entry name" value="Photosystem I P700 chlorophyll a apoprotein A2"/>
    <property type="match status" value="1"/>
</dbReference>
<dbReference type="Gene3D" id="1.20.1130.10">
    <property type="entry name" value="Photosystem I PsaA/PsaB"/>
    <property type="match status" value="1"/>
</dbReference>
<dbReference type="HAMAP" id="MF_00482">
    <property type="entry name" value="PSI_PsaB"/>
    <property type="match status" value="1"/>
</dbReference>
<dbReference type="InterPro" id="IPR001280">
    <property type="entry name" value="PSI_PsaA/B"/>
</dbReference>
<dbReference type="InterPro" id="IPR020586">
    <property type="entry name" value="PSI_PsaA/B_CS"/>
</dbReference>
<dbReference type="InterPro" id="IPR036408">
    <property type="entry name" value="PSI_PsaA/B_sf"/>
</dbReference>
<dbReference type="InterPro" id="IPR006244">
    <property type="entry name" value="PSI_PsaB"/>
</dbReference>
<dbReference type="NCBIfam" id="TIGR01336">
    <property type="entry name" value="psaB"/>
    <property type="match status" value="1"/>
</dbReference>
<dbReference type="PANTHER" id="PTHR30128">
    <property type="entry name" value="OUTER MEMBRANE PROTEIN, OMPA-RELATED"/>
    <property type="match status" value="1"/>
</dbReference>
<dbReference type="PANTHER" id="PTHR30128:SF19">
    <property type="entry name" value="PHOTOSYSTEM I P700 CHLOROPHYLL A APOPROTEIN A1-RELATED"/>
    <property type="match status" value="1"/>
</dbReference>
<dbReference type="Pfam" id="PF00223">
    <property type="entry name" value="PsaA_PsaB"/>
    <property type="match status" value="1"/>
</dbReference>
<dbReference type="PIRSF" id="PIRSF002905">
    <property type="entry name" value="PSI_A"/>
    <property type="match status" value="1"/>
</dbReference>
<dbReference type="PRINTS" id="PR00257">
    <property type="entry name" value="PHOTSYSPSAAB"/>
</dbReference>
<dbReference type="SUPFAM" id="SSF81558">
    <property type="entry name" value="Photosystem I subunits PsaA/PsaB"/>
    <property type="match status" value="1"/>
</dbReference>
<dbReference type="PROSITE" id="PS00419">
    <property type="entry name" value="PHOTOSYSTEM_I_PSAAB"/>
    <property type="match status" value="1"/>
</dbReference>
<evidence type="ECO:0000255" key="1">
    <source>
        <dbReference type="HAMAP-Rule" id="MF_00482"/>
    </source>
</evidence>
<organism>
    <name type="scientific">Calycanthus floridus var. glaucus</name>
    <name type="common">Eastern sweetshrub</name>
    <name type="synonym">Calycanthus fertilis var. ferax</name>
    <dbReference type="NCBI Taxonomy" id="212734"/>
    <lineage>
        <taxon>Eukaryota</taxon>
        <taxon>Viridiplantae</taxon>
        <taxon>Streptophyta</taxon>
        <taxon>Embryophyta</taxon>
        <taxon>Tracheophyta</taxon>
        <taxon>Spermatophyta</taxon>
        <taxon>Magnoliopsida</taxon>
        <taxon>Magnoliidae</taxon>
        <taxon>Laurales</taxon>
        <taxon>Calycanthaceae</taxon>
        <taxon>Calycanthus</taxon>
    </lineage>
</organism>
<sequence>MALRFPRFSQGLAQDPTTRRIWFGIATAHDFESHDDITEERLYQNIFASHFGQLAIIFLWTSGNLFHVAWQGNFESWVQDPLHVRPIAHAIWDPHFGQPAVEAFTRGGALGPVNIAYSGVYQWWYTIGLRTNEDLYTGALFLLFLSAISLIAGWLHLQPKWKPSVSWFKNAESRLNHHLSGLFGVSSLAWTGHLVHVAIPGARGEYVRWNNFLDVLPHPQGLAPLFTGQWNLYAQNPDSSSHLFGTSQGAGTAILTLLGGFHPQTQSLWLTDIAHHHLAIAFIFLVAGHMYRTNFGIGHSMKDLLEAHIPPGGRLGRGHKGLYDTINNSIHFQLGLALASLGVITSLVAQHMYSLPAYAFIAQDFTTQAALYTHHQYIAGFIMTGAFAHGAIFFIRDYNPEQNEDNVLARMLDHKEAIISHLSWASLFLGFHTLGLYVHNDVMLAFGTPEKQILIEPIFAQWIQSAHGKTSYGFDVLLSSTNGPAFNAGRSIWLPGWLNAVNENSNSLFLTIGPGDFLVHHAIALGLHTTTLILVKGALDARGSKLMPDKKDFGYSFPCDGPGRGGTCDISAWDAFYLAVFWMLNTIGWVTFYWHWKHITLWQGNVSQFNESSTYLMGWLRDYLWLNSSQLINGYNPFGTNSLSVWAWMFLFGHLVWATGFMFLISWRGYWQELIETLAWAHERTPLANLIRWRDKPVALSIVQARLVGLAHFSVGYIFTYAAFLIASTSGKFG</sequence>
<geneLocation type="chloroplast"/>
<accession>Q7YJX3</accession>
<protein>
    <recommendedName>
        <fullName evidence="1">Photosystem I P700 chlorophyll a apoprotein A2</fullName>
        <ecNumber evidence="1">1.97.1.12</ecNumber>
    </recommendedName>
    <alternativeName>
        <fullName evidence="1">PSI-B</fullName>
    </alternativeName>
    <alternativeName>
        <fullName evidence="1">PsaB</fullName>
    </alternativeName>
</protein>
<comment type="function">
    <text evidence="1">PsaA and PsaB bind P700, the primary electron donor of photosystem I (PSI), as well as the electron acceptors A0, A1 and FX. PSI is a plastocyanin-ferredoxin oxidoreductase, converting photonic excitation into a charge separation, which transfers an electron from the donor P700 chlorophyll pair to the spectroscopically characterized acceptors A0, A1, FX, FA and FB in turn. Oxidized P700 is reduced on the lumenal side of the thylakoid membrane by plastocyanin.</text>
</comment>
<comment type="catalytic activity">
    <reaction evidence="1">
        <text>reduced [plastocyanin] + hnu + oxidized [2Fe-2S]-[ferredoxin] = oxidized [plastocyanin] + reduced [2Fe-2S]-[ferredoxin]</text>
        <dbReference type="Rhea" id="RHEA:30407"/>
        <dbReference type="Rhea" id="RHEA-COMP:10000"/>
        <dbReference type="Rhea" id="RHEA-COMP:10001"/>
        <dbReference type="Rhea" id="RHEA-COMP:10039"/>
        <dbReference type="Rhea" id="RHEA-COMP:10040"/>
        <dbReference type="ChEBI" id="CHEBI:29036"/>
        <dbReference type="ChEBI" id="CHEBI:30212"/>
        <dbReference type="ChEBI" id="CHEBI:33737"/>
        <dbReference type="ChEBI" id="CHEBI:33738"/>
        <dbReference type="ChEBI" id="CHEBI:49552"/>
        <dbReference type="EC" id="1.97.1.12"/>
    </reaction>
</comment>
<comment type="cofactor">
    <text evidence="1">P700 is a chlorophyll a/chlorophyll a' dimer, A0 is one or more chlorophyll a, A1 is one or both phylloquinones and FX is a shared 4Fe-4S iron-sulfur center.</text>
</comment>
<comment type="subunit">
    <text evidence="1">The PsaA/B heterodimer binds the P700 chlorophyll special pair and subsequent electron acceptors. PSI consists of a core antenna complex that captures photons, and an electron transfer chain that converts photonic excitation into a charge separation. The eukaryotic PSI reaction center is composed of at least 11 subunits.</text>
</comment>
<comment type="subcellular location">
    <subcellularLocation>
        <location evidence="1">Plastid</location>
        <location evidence="1">Chloroplast thylakoid membrane</location>
        <topology evidence="1">Multi-pass membrane protein</topology>
    </subcellularLocation>
</comment>
<comment type="similarity">
    <text evidence="1">Belongs to the PsaA/PsaB family.</text>
</comment>
<feature type="chain" id="PRO_0000088606" description="Photosystem I P700 chlorophyll a apoprotein A2">
    <location>
        <begin position="1"/>
        <end position="734"/>
    </location>
</feature>
<feature type="transmembrane region" description="Helical; Name=I" evidence="1">
    <location>
        <begin position="46"/>
        <end position="69"/>
    </location>
</feature>
<feature type="transmembrane region" description="Helical; Name=II" evidence="1">
    <location>
        <begin position="135"/>
        <end position="158"/>
    </location>
</feature>
<feature type="transmembrane region" description="Helical; Name=III" evidence="1">
    <location>
        <begin position="175"/>
        <end position="199"/>
    </location>
</feature>
<feature type="transmembrane region" description="Helical; Name=IV" evidence="1">
    <location>
        <begin position="273"/>
        <end position="291"/>
    </location>
</feature>
<feature type="transmembrane region" description="Helical; Name=V" evidence="1">
    <location>
        <begin position="330"/>
        <end position="353"/>
    </location>
</feature>
<feature type="transmembrane region" description="Helical; Name=VI" evidence="1">
    <location>
        <begin position="369"/>
        <end position="395"/>
    </location>
</feature>
<feature type="transmembrane region" description="Helical; Name=VII" evidence="1">
    <location>
        <begin position="417"/>
        <end position="439"/>
    </location>
</feature>
<feature type="transmembrane region" description="Helical; Name=VIII" evidence="1">
    <location>
        <begin position="517"/>
        <end position="535"/>
    </location>
</feature>
<feature type="transmembrane region" description="Helical; Name=IX" evidence="1">
    <location>
        <begin position="575"/>
        <end position="596"/>
    </location>
</feature>
<feature type="transmembrane region" description="Helical; Name=X" evidence="1">
    <location>
        <begin position="643"/>
        <end position="665"/>
    </location>
</feature>
<feature type="transmembrane region" description="Helical; Name=XI" evidence="1">
    <location>
        <begin position="707"/>
        <end position="727"/>
    </location>
</feature>
<feature type="binding site" evidence="1">
    <location>
        <position position="559"/>
    </location>
    <ligand>
        <name>[4Fe-4S] cluster</name>
        <dbReference type="ChEBI" id="CHEBI:49883"/>
        <note>ligand shared between dimeric partners</note>
    </ligand>
</feature>
<feature type="binding site" evidence="1">
    <location>
        <position position="568"/>
    </location>
    <ligand>
        <name>[4Fe-4S] cluster</name>
        <dbReference type="ChEBI" id="CHEBI:49883"/>
        <note>ligand shared between dimeric partners</note>
    </ligand>
</feature>
<feature type="binding site" description="axial binding residue" evidence="1">
    <location>
        <position position="654"/>
    </location>
    <ligand>
        <name>chlorophyll a</name>
        <dbReference type="ChEBI" id="CHEBI:58416"/>
        <label>B1</label>
    </ligand>
    <ligandPart>
        <name>Mg</name>
        <dbReference type="ChEBI" id="CHEBI:25107"/>
    </ligandPart>
</feature>
<feature type="binding site" description="axial binding residue" evidence="1">
    <location>
        <position position="662"/>
    </location>
    <ligand>
        <name>chlorophyll a</name>
        <dbReference type="ChEBI" id="CHEBI:58416"/>
        <label>B3</label>
    </ligand>
    <ligandPart>
        <name>Mg</name>
        <dbReference type="ChEBI" id="CHEBI:25107"/>
    </ligandPart>
</feature>
<feature type="binding site" evidence="1">
    <location>
        <position position="670"/>
    </location>
    <ligand>
        <name>chlorophyll a</name>
        <dbReference type="ChEBI" id="CHEBI:58416"/>
        <label>B3</label>
    </ligand>
</feature>
<feature type="binding site" evidence="1">
    <location>
        <position position="671"/>
    </location>
    <ligand>
        <name>phylloquinone</name>
        <dbReference type="ChEBI" id="CHEBI:18067"/>
        <label>B</label>
    </ligand>
</feature>
<proteinExistence type="inferred from homology"/>
<gene>
    <name evidence="1" type="primary">psaB</name>
</gene>
<name>PSAB_CALFG</name>
<keyword id="KW-0004">4Fe-4S</keyword>
<keyword id="KW-0148">Chlorophyll</keyword>
<keyword id="KW-0150">Chloroplast</keyword>
<keyword id="KW-0157">Chromophore</keyword>
<keyword id="KW-0249">Electron transport</keyword>
<keyword id="KW-0408">Iron</keyword>
<keyword id="KW-0411">Iron-sulfur</keyword>
<keyword id="KW-0460">Magnesium</keyword>
<keyword id="KW-0472">Membrane</keyword>
<keyword id="KW-0479">Metal-binding</keyword>
<keyword id="KW-0560">Oxidoreductase</keyword>
<keyword id="KW-0602">Photosynthesis</keyword>
<keyword id="KW-0603">Photosystem I</keyword>
<keyword id="KW-0934">Plastid</keyword>
<keyword id="KW-0793">Thylakoid</keyword>
<keyword id="KW-0812">Transmembrane</keyword>
<keyword id="KW-1133">Transmembrane helix</keyword>
<keyword id="KW-0813">Transport</keyword>
<reference key="1">
    <citation type="journal article" date="2003" name="Plant Syst. Evol.">
        <title>The chloroplast genome of the 'basal' angiosperm Calycanthus fertilis -- structural and phylogenetic analyses.</title>
        <authorList>
            <person name="Goremykin V."/>
            <person name="Hirsch-Ernst K.I."/>
            <person name="Woelfl S."/>
            <person name="Hellwig F.H."/>
        </authorList>
    </citation>
    <scope>NUCLEOTIDE SEQUENCE [LARGE SCALE GENOMIC DNA]</scope>
</reference>